<protein>
    <recommendedName>
        <fullName evidence="1">Nuclear distribution protein PAC1</fullName>
    </recommendedName>
    <alternativeName>
        <fullName evidence="1">Lissencephaly-1 homolog</fullName>
        <shortName evidence="1">LIS-1</shortName>
    </alternativeName>
    <alternativeName>
        <fullName evidence="1">nudF homolog</fullName>
    </alternativeName>
</protein>
<feature type="chain" id="PRO_0000405101" description="Nuclear distribution protein PAC1">
    <location>
        <begin position="1"/>
        <end position="494"/>
    </location>
</feature>
<feature type="domain" description="LisH" evidence="1">
    <location>
        <begin position="14"/>
        <end position="46"/>
    </location>
</feature>
<feature type="repeat" description="WD 1">
    <location>
        <begin position="153"/>
        <end position="192"/>
    </location>
</feature>
<feature type="repeat" description="WD 2">
    <location>
        <begin position="196"/>
        <end position="244"/>
    </location>
</feature>
<feature type="repeat" description="WD 3">
    <location>
        <begin position="251"/>
        <end position="292"/>
    </location>
</feature>
<feature type="repeat" description="WD 4">
    <location>
        <begin position="295"/>
        <end position="334"/>
    </location>
</feature>
<feature type="repeat" description="WD 5">
    <location>
        <begin position="347"/>
        <end position="395"/>
    </location>
</feature>
<feature type="repeat" description="WD 6">
    <location>
        <begin position="415"/>
        <end position="454"/>
    </location>
</feature>
<feature type="repeat" description="WD 7">
    <location>
        <begin position="457"/>
        <end position="492"/>
    </location>
</feature>
<feature type="coiled-coil region" evidence="1">
    <location>
        <begin position="90"/>
        <end position="123"/>
    </location>
</feature>
<evidence type="ECO:0000255" key="1">
    <source>
        <dbReference type="HAMAP-Rule" id="MF_03141"/>
    </source>
</evidence>
<name>LIS1_YEAS2</name>
<dbReference type="EMBL" id="ACFL01000381">
    <property type="protein sequence ID" value="EEU04867.1"/>
    <property type="molecule type" value="Genomic_DNA"/>
</dbReference>
<dbReference type="SMR" id="C7GWC1"/>
<dbReference type="OrthoDB" id="39980at4893"/>
<dbReference type="Proteomes" id="UP000008073">
    <property type="component" value="Unassembled WGS sequence"/>
</dbReference>
<dbReference type="GO" id="GO:0005737">
    <property type="term" value="C:cytoplasm"/>
    <property type="evidence" value="ECO:0007669"/>
    <property type="project" value="UniProtKB-UniRule"/>
</dbReference>
<dbReference type="GO" id="GO:0005874">
    <property type="term" value="C:microtubule"/>
    <property type="evidence" value="ECO:0007669"/>
    <property type="project" value="UniProtKB-KW"/>
</dbReference>
<dbReference type="GO" id="GO:0005875">
    <property type="term" value="C:microtubule associated complex"/>
    <property type="evidence" value="ECO:0007669"/>
    <property type="project" value="UniProtKB-UniRule"/>
</dbReference>
<dbReference type="GO" id="GO:0000922">
    <property type="term" value="C:spindle pole"/>
    <property type="evidence" value="ECO:0007669"/>
    <property type="project" value="UniProtKB-SubCell"/>
</dbReference>
<dbReference type="GO" id="GO:0070840">
    <property type="term" value="F:dynein complex binding"/>
    <property type="evidence" value="ECO:0007669"/>
    <property type="project" value="UniProtKB-UniRule"/>
</dbReference>
<dbReference type="GO" id="GO:0051301">
    <property type="term" value="P:cell division"/>
    <property type="evidence" value="ECO:0007669"/>
    <property type="project" value="UniProtKB-KW"/>
</dbReference>
<dbReference type="GO" id="GO:0000132">
    <property type="term" value="P:establishment of mitotic spindle orientation"/>
    <property type="evidence" value="ECO:0007669"/>
    <property type="project" value="UniProtKB-UniRule"/>
</dbReference>
<dbReference type="GO" id="GO:0051012">
    <property type="term" value="P:microtubule sliding"/>
    <property type="evidence" value="ECO:0007669"/>
    <property type="project" value="UniProtKB-UniRule"/>
</dbReference>
<dbReference type="CDD" id="cd00200">
    <property type="entry name" value="WD40"/>
    <property type="match status" value="1"/>
</dbReference>
<dbReference type="FunFam" id="2.130.10.10:FF:000902">
    <property type="entry name" value="Nuclear distribution protein PAC1"/>
    <property type="match status" value="1"/>
</dbReference>
<dbReference type="Gene3D" id="1.20.960.30">
    <property type="match status" value="1"/>
</dbReference>
<dbReference type="Gene3D" id="2.130.10.10">
    <property type="entry name" value="YVTN repeat-like/Quinoprotein amine dehydrogenase"/>
    <property type="match status" value="1"/>
</dbReference>
<dbReference type="HAMAP" id="MF_03141">
    <property type="entry name" value="lis1"/>
    <property type="match status" value="1"/>
</dbReference>
<dbReference type="InterPro" id="IPR017252">
    <property type="entry name" value="Dynein_regulator_LIS1"/>
</dbReference>
<dbReference type="InterPro" id="IPR020472">
    <property type="entry name" value="G-protein_beta_WD-40_rep"/>
</dbReference>
<dbReference type="InterPro" id="IPR037190">
    <property type="entry name" value="LIS1_N"/>
</dbReference>
<dbReference type="InterPro" id="IPR015943">
    <property type="entry name" value="WD40/YVTN_repeat-like_dom_sf"/>
</dbReference>
<dbReference type="InterPro" id="IPR019775">
    <property type="entry name" value="WD40_repeat_CS"/>
</dbReference>
<dbReference type="InterPro" id="IPR036322">
    <property type="entry name" value="WD40_repeat_dom_sf"/>
</dbReference>
<dbReference type="InterPro" id="IPR001680">
    <property type="entry name" value="WD40_rpt"/>
</dbReference>
<dbReference type="PANTHER" id="PTHR19848:SF8">
    <property type="entry name" value="F-BOX AND WD REPEAT DOMAIN CONTAINING 7"/>
    <property type="match status" value="1"/>
</dbReference>
<dbReference type="PANTHER" id="PTHR19848">
    <property type="entry name" value="WD40 REPEAT PROTEIN"/>
    <property type="match status" value="1"/>
</dbReference>
<dbReference type="Pfam" id="PF00400">
    <property type="entry name" value="WD40"/>
    <property type="match status" value="4"/>
</dbReference>
<dbReference type="PIRSF" id="PIRSF037647">
    <property type="entry name" value="Dynein_regulator_Lis1"/>
    <property type="match status" value="1"/>
</dbReference>
<dbReference type="PRINTS" id="PR00320">
    <property type="entry name" value="GPROTEINBRPT"/>
</dbReference>
<dbReference type="SMART" id="SM00320">
    <property type="entry name" value="WD40"/>
    <property type="match status" value="7"/>
</dbReference>
<dbReference type="SUPFAM" id="SSF109925">
    <property type="entry name" value="Lissencephaly-1 protein (Lis-1, PAF-AH alpha) N-terminal domain"/>
    <property type="match status" value="1"/>
</dbReference>
<dbReference type="SUPFAM" id="SSF50978">
    <property type="entry name" value="WD40 repeat-like"/>
    <property type="match status" value="1"/>
</dbReference>
<dbReference type="PROSITE" id="PS00678">
    <property type="entry name" value="WD_REPEATS_1"/>
    <property type="match status" value="2"/>
</dbReference>
<dbReference type="PROSITE" id="PS50082">
    <property type="entry name" value="WD_REPEATS_2"/>
    <property type="match status" value="2"/>
</dbReference>
<dbReference type="PROSITE" id="PS50294">
    <property type="entry name" value="WD_REPEATS_REGION"/>
    <property type="match status" value="1"/>
</dbReference>
<proteinExistence type="inferred from homology"/>
<organism>
    <name type="scientific">Saccharomyces cerevisiae (strain JAY291)</name>
    <name type="common">Baker's yeast</name>
    <dbReference type="NCBI Taxonomy" id="574961"/>
    <lineage>
        <taxon>Eukaryota</taxon>
        <taxon>Fungi</taxon>
        <taxon>Dikarya</taxon>
        <taxon>Ascomycota</taxon>
        <taxon>Saccharomycotina</taxon>
        <taxon>Saccharomycetes</taxon>
        <taxon>Saccharomycetales</taxon>
        <taxon>Saccharomycetaceae</taxon>
        <taxon>Saccharomyces</taxon>
    </lineage>
</organism>
<comment type="function">
    <text evidence="1">Positively regulates the activity of the minus-end directed microtubule motor protein dynein. Plays a central role in positioning the mitotic spindle at the bud neck during cell division. Targets cytoplasmic dynein to microtubule plus ends, thereby promoting dynein-mediated microtubule sliding along the bud cortex and consequently the movement of the mitotic spindle to the bud neck.</text>
</comment>
<comment type="subunit">
    <text evidence="1">Self-associates. Interacts with NDL1 and dynein.</text>
</comment>
<comment type="subcellular location">
    <subcellularLocation>
        <location evidence="1">Cytoplasm</location>
        <location evidence="1">Cytoskeleton</location>
    </subcellularLocation>
    <subcellularLocation>
        <location evidence="1">Cytoplasm</location>
        <location evidence="1">Cytoskeleton</location>
        <location evidence="1">Spindle pole</location>
    </subcellularLocation>
    <text evidence="1">Localizes to the plus ends of microtubules and the mitotic spindle poles.</text>
</comment>
<comment type="domain">
    <text evidence="1">Dimerization mediated by the LisH domain may be required to activate dynein.</text>
</comment>
<comment type="similarity">
    <text evidence="1">Belongs to the WD repeat LIS1/nudF family.</text>
</comment>
<accession>C7GWC1</accession>
<sequence>MTNWQQQLPLTDTQKNELDKSVLRYLNWNYKQTVRHEHAQDYESVRHAIVTLSGFLLQESVDRQEFISNNDTSNESMVDIDELLLPKKWNSIVRLQKKIIELEQNTETLVSQIKDLNTQVSELAQFKPTTSNGTSAHNVLKWIPRNLPSCLINVESSVTSVKLHPNLPIVFVATDHGKLYAFDLFNYTIPLASLQSHTKAITSMDVLFTNFTNSSKKNYLVVVTASKDLQIHVFKWVSEECKFQQIRSLLGHEHIVSAVKIWQKNNDVHIASCSRDQTVKIWDFHNGWSLKTFQPHSQWVRSIDVLGDYIISGSHDTTLRLTHWPSGNGLSVGTGHEFPIEKVKFIHFIEDSPEIRFRTPSTDRYKNWGMQYCVSASRDRTIKIWEIPLPTLMAHRAPIPNPTDSNFRCVLTLKGHLSWVRDISIRGQYLFSCADDKSVRCWDLNTGQCLHVWEKLHTGFVNSLDLDVDFDSNVTPRQMMVTGGLDCKSNVFMR</sequence>
<reference key="1">
    <citation type="journal article" date="2009" name="Genome Res.">
        <title>Genome structure of a Saccharomyces cerevisiae strain widely used in bioethanol production.</title>
        <authorList>
            <person name="Argueso J.L."/>
            <person name="Carazzolle M.F."/>
            <person name="Mieczkowski P.A."/>
            <person name="Duarte F.M."/>
            <person name="Netto O.V.C."/>
            <person name="Missawa S.K."/>
            <person name="Galzerani F."/>
            <person name="Costa G.G.L."/>
            <person name="Vidal R.O."/>
            <person name="Noronha M.F."/>
            <person name="Dominska M."/>
            <person name="Andrietta M.G.S."/>
            <person name="Andrietta S.R."/>
            <person name="Cunha A.F."/>
            <person name="Gomes L.H."/>
            <person name="Tavares F.C.A."/>
            <person name="Alcarde A.R."/>
            <person name="Dietrich F.S."/>
            <person name="McCusker J.H."/>
            <person name="Petes T.D."/>
            <person name="Pereira G.A.G."/>
        </authorList>
    </citation>
    <scope>NUCLEOTIDE SEQUENCE [LARGE SCALE GENOMIC DNA]</scope>
    <source>
        <strain>JAY291</strain>
    </source>
</reference>
<gene>
    <name evidence="1" type="primary">PAC1</name>
    <name evidence="1" type="synonym">LIS1</name>
    <name type="ORF">C1Q_04815</name>
</gene>
<keyword id="KW-0131">Cell cycle</keyword>
<keyword id="KW-0132">Cell division</keyword>
<keyword id="KW-0175">Coiled coil</keyword>
<keyword id="KW-0963">Cytoplasm</keyword>
<keyword id="KW-0206">Cytoskeleton</keyword>
<keyword id="KW-0493">Microtubule</keyword>
<keyword id="KW-0498">Mitosis</keyword>
<keyword id="KW-0677">Repeat</keyword>
<keyword id="KW-0813">Transport</keyword>
<keyword id="KW-0853">WD repeat</keyword>